<feature type="chain" id="PRO_0000432225" description="MAP3K epsilon protein kinase 2">
    <location>
        <begin position="1"/>
        <end position="1367"/>
    </location>
</feature>
<feature type="domain" description="Protein kinase" evidence="5">
    <location>
        <begin position="20"/>
        <end position="274"/>
    </location>
</feature>
<feature type="repeat" description="HEAT 1" evidence="4">
    <location>
        <begin position="25"/>
        <end position="62"/>
    </location>
</feature>
<feature type="repeat" description="HEAT 2" evidence="4">
    <location>
        <begin position="86"/>
        <end position="125"/>
    </location>
</feature>
<feature type="repeat" description="HEAT 3" evidence="4">
    <location>
        <begin position="218"/>
        <end position="256"/>
    </location>
</feature>
<feature type="repeat" description="HEAT 4" evidence="4">
    <location>
        <begin position="538"/>
        <end position="576"/>
    </location>
</feature>
<feature type="repeat" description="HEAT 5" evidence="4">
    <location>
        <begin position="577"/>
        <end position="614"/>
    </location>
</feature>
<feature type="repeat" description="HEAT 6" evidence="4">
    <location>
        <begin position="633"/>
        <end position="658"/>
    </location>
</feature>
<feature type="repeat" description="HEAT 7" evidence="4">
    <location>
        <begin position="659"/>
        <end position="700"/>
    </location>
</feature>
<feature type="repeat" description="HEAT 8" evidence="4">
    <location>
        <begin position="704"/>
        <end position="742"/>
    </location>
</feature>
<feature type="repeat" description="HEAT 9" evidence="4">
    <location>
        <begin position="850"/>
        <end position="888"/>
    </location>
</feature>
<feature type="repeat" description="HEAT 10" evidence="4">
    <location>
        <begin position="906"/>
        <end position="943"/>
    </location>
</feature>
<feature type="repeat" description="HEAT 11" evidence="4">
    <location>
        <begin position="1045"/>
        <end position="1066"/>
    </location>
</feature>
<feature type="repeat" description="HEAT 12" evidence="4">
    <location>
        <begin position="1067"/>
        <end position="1105"/>
    </location>
</feature>
<feature type="repeat" description="HEAT 13" evidence="4">
    <location>
        <begin position="1112"/>
        <end position="1150"/>
    </location>
</feature>
<feature type="repeat" description="HEAT 14" evidence="4">
    <location>
        <begin position="1154"/>
        <end position="1191"/>
    </location>
</feature>
<feature type="repeat" description="HEAT 15" evidence="4">
    <location>
        <begin position="1196"/>
        <end position="1236"/>
    </location>
</feature>
<feature type="repeat" description="HEAT 16" evidence="4">
    <location>
        <begin position="1257"/>
        <end position="1280"/>
    </location>
</feature>
<feature type="repeat" description="HEAT 17" evidence="4">
    <location>
        <begin position="1281"/>
        <end position="1317"/>
    </location>
</feature>
<feature type="repeat" description="HEAT 18" evidence="4">
    <location>
        <begin position="1347"/>
        <end position="1367"/>
    </location>
</feature>
<feature type="region of interest" description="Disordered" evidence="6">
    <location>
        <begin position="285"/>
        <end position="422"/>
    </location>
</feature>
<feature type="region of interest" description="Disordered" evidence="6">
    <location>
        <begin position="437"/>
        <end position="513"/>
    </location>
</feature>
<feature type="region of interest" description="Disordered" evidence="6">
    <location>
        <begin position="792"/>
        <end position="860"/>
    </location>
</feature>
<feature type="compositionally biased region" description="Basic and acidic residues" evidence="6">
    <location>
        <begin position="293"/>
        <end position="306"/>
    </location>
</feature>
<feature type="compositionally biased region" description="Acidic residues" evidence="6">
    <location>
        <begin position="351"/>
        <end position="363"/>
    </location>
</feature>
<feature type="compositionally biased region" description="Polar residues" evidence="6">
    <location>
        <begin position="378"/>
        <end position="396"/>
    </location>
</feature>
<feature type="compositionally biased region" description="Basic and acidic residues" evidence="6">
    <location>
        <begin position="397"/>
        <end position="408"/>
    </location>
</feature>
<feature type="compositionally biased region" description="Basic and acidic residues" evidence="6">
    <location>
        <begin position="475"/>
        <end position="491"/>
    </location>
</feature>
<feature type="compositionally biased region" description="Polar residues" evidence="6">
    <location>
        <begin position="492"/>
        <end position="507"/>
    </location>
</feature>
<feature type="compositionally biased region" description="Polar residues" evidence="6">
    <location>
        <begin position="799"/>
        <end position="814"/>
    </location>
</feature>
<feature type="compositionally biased region" description="Polar residues" evidence="6">
    <location>
        <begin position="835"/>
        <end position="845"/>
    </location>
</feature>
<feature type="compositionally biased region" description="Basic and acidic residues" evidence="6">
    <location>
        <begin position="846"/>
        <end position="859"/>
    </location>
</feature>
<feature type="active site" description="Proton acceptor" evidence="5">
    <location>
        <position position="144"/>
    </location>
</feature>
<feature type="binding site" evidence="5">
    <location>
        <begin position="26"/>
        <end position="34"/>
    </location>
    <ligand>
        <name>ATP</name>
        <dbReference type="ChEBI" id="CHEBI:30616"/>
    </ligand>
</feature>
<feature type="binding site" evidence="5">
    <location>
        <position position="49"/>
    </location>
    <ligand>
        <name>ATP</name>
        <dbReference type="ChEBI" id="CHEBI:30616"/>
    </ligand>
</feature>
<protein>
    <recommendedName>
        <fullName evidence="11">MAP3K epsilon protein kinase 2</fullName>
        <ecNumber evidence="1">2.7.11.1</ecNumber>
    </recommendedName>
    <alternativeName>
        <fullName evidence="12">Mitogen-activated protein kinase kinase kinase 6</fullName>
    </alternativeName>
</protein>
<keyword id="KW-0067">ATP-binding</keyword>
<keyword id="KW-0131">Cell cycle</keyword>
<keyword id="KW-0132">Cell division</keyword>
<keyword id="KW-1003">Cell membrane</keyword>
<keyword id="KW-0963">Cytoplasm</keyword>
<keyword id="KW-0206">Cytoskeleton</keyword>
<keyword id="KW-0418">Kinase</keyword>
<keyword id="KW-0472">Membrane</keyword>
<keyword id="KW-0547">Nucleotide-binding</keyword>
<keyword id="KW-0539">Nucleus</keyword>
<keyword id="KW-0597">Phosphoprotein</keyword>
<keyword id="KW-1185">Reference proteome</keyword>
<keyword id="KW-0677">Repeat</keyword>
<keyword id="KW-0723">Serine/threonine-protein kinase</keyword>
<keyword id="KW-0808">Transferase</keyword>
<reference key="1">
    <citation type="journal article" date="2000" name="Nature">
        <title>Sequence and analysis of chromosome 3 of the plant Arabidopsis thaliana.</title>
        <authorList>
            <person name="Salanoubat M."/>
            <person name="Lemcke K."/>
            <person name="Rieger M."/>
            <person name="Ansorge W."/>
            <person name="Unseld M."/>
            <person name="Fartmann B."/>
            <person name="Valle G."/>
            <person name="Bloecker H."/>
            <person name="Perez-Alonso M."/>
            <person name="Obermaier B."/>
            <person name="Delseny M."/>
            <person name="Boutry M."/>
            <person name="Grivell L.A."/>
            <person name="Mache R."/>
            <person name="Puigdomenech P."/>
            <person name="De Simone V."/>
            <person name="Choisne N."/>
            <person name="Artiguenave F."/>
            <person name="Robert C."/>
            <person name="Brottier P."/>
            <person name="Wincker P."/>
            <person name="Cattolico L."/>
            <person name="Weissenbach J."/>
            <person name="Saurin W."/>
            <person name="Quetier F."/>
            <person name="Schaefer M."/>
            <person name="Mueller-Auer S."/>
            <person name="Gabel C."/>
            <person name="Fuchs M."/>
            <person name="Benes V."/>
            <person name="Wurmbach E."/>
            <person name="Drzonek H."/>
            <person name="Erfle H."/>
            <person name="Jordan N."/>
            <person name="Bangert S."/>
            <person name="Wiedelmann R."/>
            <person name="Kranz H."/>
            <person name="Voss H."/>
            <person name="Holland R."/>
            <person name="Brandt P."/>
            <person name="Nyakatura G."/>
            <person name="Vezzi A."/>
            <person name="D'Angelo M."/>
            <person name="Pallavicini A."/>
            <person name="Toppo S."/>
            <person name="Simionati B."/>
            <person name="Conrad A."/>
            <person name="Hornischer K."/>
            <person name="Kauer G."/>
            <person name="Loehnert T.-H."/>
            <person name="Nordsiek G."/>
            <person name="Reichelt J."/>
            <person name="Scharfe M."/>
            <person name="Schoen O."/>
            <person name="Bargues M."/>
            <person name="Terol J."/>
            <person name="Climent J."/>
            <person name="Navarro P."/>
            <person name="Collado C."/>
            <person name="Perez-Perez A."/>
            <person name="Ottenwaelder B."/>
            <person name="Duchemin D."/>
            <person name="Cooke R."/>
            <person name="Laudie M."/>
            <person name="Berger-Llauro C."/>
            <person name="Purnelle B."/>
            <person name="Masuy D."/>
            <person name="de Haan M."/>
            <person name="Maarse A.C."/>
            <person name="Alcaraz J.-P."/>
            <person name="Cottet A."/>
            <person name="Casacuberta E."/>
            <person name="Monfort A."/>
            <person name="Argiriou A."/>
            <person name="Flores M."/>
            <person name="Liguori R."/>
            <person name="Vitale D."/>
            <person name="Mannhaupt G."/>
            <person name="Haase D."/>
            <person name="Schoof H."/>
            <person name="Rudd S."/>
            <person name="Zaccaria P."/>
            <person name="Mewes H.-W."/>
            <person name="Mayer K.F.X."/>
            <person name="Kaul S."/>
            <person name="Town C.D."/>
            <person name="Koo H.L."/>
            <person name="Tallon L.J."/>
            <person name="Jenkins J."/>
            <person name="Rooney T."/>
            <person name="Rizzo M."/>
            <person name="Walts A."/>
            <person name="Utterback T."/>
            <person name="Fujii C.Y."/>
            <person name="Shea T.P."/>
            <person name="Creasy T.H."/>
            <person name="Haas B."/>
            <person name="Maiti R."/>
            <person name="Wu D."/>
            <person name="Peterson J."/>
            <person name="Van Aken S."/>
            <person name="Pai G."/>
            <person name="Militscher J."/>
            <person name="Sellers P."/>
            <person name="Gill J.E."/>
            <person name="Feldblyum T.V."/>
            <person name="Preuss D."/>
            <person name="Lin X."/>
            <person name="Nierman W.C."/>
            <person name="Salzberg S.L."/>
            <person name="White O."/>
            <person name="Venter J.C."/>
            <person name="Fraser C.M."/>
            <person name="Kaneko T."/>
            <person name="Nakamura Y."/>
            <person name="Sato S."/>
            <person name="Kato T."/>
            <person name="Asamizu E."/>
            <person name="Sasamoto S."/>
            <person name="Kimura T."/>
            <person name="Idesawa K."/>
            <person name="Kawashima K."/>
            <person name="Kishida Y."/>
            <person name="Kiyokawa C."/>
            <person name="Kohara M."/>
            <person name="Matsumoto M."/>
            <person name="Matsuno A."/>
            <person name="Muraki A."/>
            <person name="Nakayama S."/>
            <person name="Nakazaki N."/>
            <person name="Shinpo S."/>
            <person name="Takeuchi C."/>
            <person name="Wada T."/>
            <person name="Watanabe A."/>
            <person name="Yamada M."/>
            <person name="Yasuda M."/>
            <person name="Tabata S."/>
        </authorList>
    </citation>
    <scope>NUCLEOTIDE SEQUENCE [LARGE SCALE GENOMIC DNA]</scope>
    <source>
        <strain>cv. Columbia</strain>
    </source>
</reference>
<reference key="2">
    <citation type="journal article" date="2017" name="Plant J.">
        <title>Araport11: a complete reannotation of the Arabidopsis thaliana reference genome.</title>
        <authorList>
            <person name="Cheng C.Y."/>
            <person name="Krishnakumar V."/>
            <person name="Chan A.P."/>
            <person name="Thibaud-Nissen F."/>
            <person name="Schobel S."/>
            <person name="Town C.D."/>
        </authorList>
    </citation>
    <scope>GENOME REANNOTATION</scope>
    <source>
        <strain>cv. Columbia</strain>
    </source>
</reference>
<reference key="3">
    <citation type="journal article" date="2002" name="Trends Plant Sci.">
        <title>Mitogen-activated protein kinase cascades in plants: a new nomenclature.</title>
        <authorList>
            <consortium name="MAPK group"/>
        </authorList>
    </citation>
    <scope>GENE FAMILY</scope>
    <scope>NOMENCLATURE</scope>
</reference>
<reference key="4">
    <citation type="journal article" date="2001" name="Plant J.">
        <title>The protein kinases AtMAP3Kepsilon1 and BnMAP3Kepsilon1 are functional homologues of S. pombe cdc7p and may be involved in cell division.</title>
        <authorList>
            <person name="Jouannic S."/>
            <person name="Champion A."/>
            <person name="Segui-Simarro J.-M."/>
            <person name="Salimova E."/>
            <person name="Picaud A."/>
            <person name="Tregear J."/>
            <person name="Testillano P."/>
            <person name="Risueno M.-C."/>
            <person name="Simanis V."/>
            <person name="Kreis M."/>
            <person name="Henry Y."/>
        </authorList>
    </citation>
    <scope>TISSUE SPECIFICITY</scope>
</reference>
<reference key="5">
    <citation type="journal article" date="2004" name="Funct. Integr. Genomics">
        <title>Arabidopsis kinome: after the casting.</title>
        <authorList>
            <person name="Champion A."/>
            <person name="Kreis M."/>
            <person name="Mockaitis K."/>
            <person name="Picaud A."/>
            <person name="Henry Y."/>
        </authorList>
    </citation>
    <scope>REVIEW</scope>
</reference>
<reference key="6">
    <citation type="journal article" date="2004" name="J. Cell Sci.">
        <title>AtSGP1, AtSGP2 and MAP4K alpha are nucleolar plant proteins that can complement fission yeast mutants lacking a functional SIN pathway.</title>
        <authorList>
            <person name="Champion A."/>
            <person name="Jouannic S."/>
            <person name="Guillon S."/>
            <person name="Mockaitis K."/>
            <person name="Krapp A."/>
            <person name="Picaud A."/>
            <person name="Simanis V."/>
            <person name="Kreis M."/>
            <person name="Henry Y."/>
        </authorList>
    </citation>
    <scope>FUNCTION</scope>
    <scope>TISSUE SPECIFICITY</scope>
    <scope>INDUCTION</scope>
    <scope>SUBCELLULAR LOCATION</scope>
    <source>
        <strain>cv. Columbia</strain>
    </source>
</reference>
<reference key="7">
    <citation type="journal article" date="2006" name="Plant J.">
        <title>The protein kinase genes MAP3K epsilon 1 and MAP3K epsilon 2 are required for pollen viability in Arabidopsis thaliana.</title>
        <authorList>
            <person name="Chaiwongsar S."/>
            <person name="Otegui M.S."/>
            <person name="Jester P.J."/>
            <person name="Monson S.S."/>
            <person name="Krysan P.J."/>
        </authorList>
    </citation>
    <scope>FUNCTION</scope>
    <scope>DISRUPTION PHENOTYPE</scope>
    <source>
        <strain>cv. Columbia</strain>
    </source>
</reference>
<reference key="8">
    <citation type="journal article" date="2012" name="Front. Plant Sci.">
        <title>Genetic analysis of the Arabidopsis protein kinases MAP3Kepsilon1 and MAP3Kepsilon2 indicates roles in cell expansion and embryo development.</title>
        <authorList>
            <person name="Chaiwongsar S."/>
            <person name="Strohm A.K."/>
            <person name="Su S.-H."/>
            <person name="Krysan P.J."/>
        </authorList>
    </citation>
    <scope>FUNCTION</scope>
    <scope>DISRUPTION PHENOTYPE</scope>
    <scope>TISSUE SPECIFICITY</scope>
    <scope>DEVELOPMENTAL STAGE</scope>
    <source>
        <strain>cv. Columbia</strain>
    </source>
</reference>
<evidence type="ECO:0000250" key="1">
    <source>
        <dbReference type="UniProtKB" id="A0A078CGE6"/>
    </source>
</evidence>
<evidence type="ECO:0000250" key="2">
    <source>
        <dbReference type="UniProtKB" id="Q8T2I8"/>
    </source>
</evidence>
<evidence type="ECO:0000250" key="3">
    <source>
        <dbReference type="UniProtKB" id="Q9LJD8"/>
    </source>
</evidence>
<evidence type="ECO:0000255" key="4"/>
<evidence type="ECO:0000255" key="5">
    <source>
        <dbReference type="PROSITE-ProRule" id="PRU00159"/>
    </source>
</evidence>
<evidence type="ECO:0000256" key="6">
    <source>
        <dbReference type="SAM" id="MobiDB-lite"/>
    </source>
</evidence>
<evidence type="ECO:0000269" key="7">
    <source>
    </source>
</evidence>
<evidence type="ECO:0000269" key="8">
    <source>
    </source>
</evidence>
<evidence type="ECO:0000269" key="9">
    <source>
    </source>
</evidence>
<evidence type="ECO:0000269" key="10">
    <source>
    </source>
</evidence>
<evidence type="ECO:0000303" key="11">
    <source>
    </source>
</evidence>
<evidence type="ECO:0000305" key="12"/>
<evidence type="ECO:0000312" key="13">
    <source>
        <dbReference type="Araport" id="AT3G07980"/>
    </source>
</evidence>
<evidence type="ECO:0000312" key="14">
    <source>
        <dbReference type="EMBL" id="AAF21208.1"/>
    </source>
</evidence>
<evidence type="ECO:0000312" key="15">
    <source>
        <dbReference type="Proteomes" id="UP000006548"/>
    </source>
</evidence>
<gene>
    <name evidence="11" type="primary">MAP3KE2</name>
    <name evidence="12" type="synonym">MAPKKK6</name>
    <name evidence="13" type="ordered locus">At3g07980</name>
    <name evidence="14" type="ORF">F17A17.32</name>
</gene>
<comment type="function">
    <text evidence="8 9 10">Serine/threonine-protein kinase involved in the spatial and temporal control system organizing cortical activities in mitotic and postmitotic cells (PubMed:15292395). Required for the normal functioning of the plasma membrane in developing pollen (PubMed:16965555). Involved in the regulation of cell expansion and embryo development (PubMed:23087695).</text>
</comment>
<comment type="catalytic activity">
    <reaction evidence="1">
        <text>L-seryl-[protein] + ATP = O-phospho-L-seryl-[protein] + ADP + H(+)</text>
        <dbReference type="Rhea" id="RHEA:17989"/>
        <dbReference type="Rhea" id="RHEA-COMP:9863"/>
        <dbReference type="Rhea" id="RHEA-COMP:11604"/>
        <dbReference type="ChEBI" id="CHEBI:15378"/>
        <dbReference type="ChEBI" id="CHEBI:29999"/>
        <dbReference type="ChEBI" id="CHEBI:30616"/>
        <dbReference type="ChEBI" id="CHEBI:83421"/>
        <dbReference type="ChEBI" id="CHEBI:456216"/>
        <dbReference type="EC" id="2.7.11.1"/>
    </reaction>
</comment>
<comment type="catalytic activity">
    <reaction evidence="1">
        <text>L-threonyl-[protein] + ATP = O-phospho-L-threonyl-[protein] + ADP + H(+)</text>
        <dbReference type="Rhea" id="RHEA:46608"/>
        <dbReference type="Rhea" id="RHEA-COMP:11060"/>
        <dbReference type="Rhea" id="RHEA-COMP:11605"/>
        <dbReference type="ChEBI" id="CHEBI:15378"/>
        <dbReference type="ChEBI" id="CHEBI:30013"/>
        <dbReference type="ChEBI" id="CHEBI:30616"/>
        <dbReference type="ChEBI" id="CHEBI:61977"/>
        <dbReference type="ChEBI" id="CHEBI:456216"/>
        <dbReference type="EC" id="2.7.11.1"/>
    </reaction>
</comment>
<comment type="subcellular location">
    <subcellularLocation>
        <location evidence="2">Cytoplasm</location>
        <location evidence="2">Cytoskeleton</location>
        <location evidence="2">Microtubule organizing center</location>
    </subcellularLocation>
    <subcellularLocation>
        <location evidence="8">Nucleus</location>
        <location evidence="8">Nucleolus</location>
    </subcellularLocation>
    <subcellularLocation>
        <location evidence="3">Cell membrane</location>
    </subcellularLocation>
    <text evidence="3 8">Accumulates in the nucleolus during interphase (PubMed:15292395). Localized to the plasma membrane in developing pollen grains (By similarity).</text>
</comment>
<comment type="tissue specificity">
    <text evidence="7 8 10">Expressed in both the sporophytic and the gametophytic tissues, especially in dividing cells. Mostly present in flower buds and mature flowers. Also accumulates in embryos and in roots.</text>
</comment>
<comment type="developmental stage">
    <text evidence="10">Expressed during embryo development.</text>
</comment>
<comment type="induction">
    <text evidence="8">Expression is cell cycle-regulated, with higher expression in G2-M phases.</text>
</comment>
<comment type="PTM">
    <text evidence="1">Autophosphorylated.</text>
</comment>
<comment type="disruption phenotype">
    <text evidence="9 10">Pollen lethality in plants lacking both MAP3KE1 and MAP3KE2, associated with plasma membrane irregularities following pollen mitosis I (PubMed:16965555). Smaller plants with shorter roots due to reduced cell elongation in roots and reduced cell expansion in rosette leaves, as well as embryos arrest in the early stages of development (PubMed:23087695).</text>
</comment>
<comment type="similarity">
    <text evidence="5">Belongs to the protein kinase superfamily. Ser/Thr protein kinase family.</text>
</comment>
<accession>Q9SFB6</accession>
<organism evidence="15">
    <name type="scientific">Arabidopsis thaliana</name>
    <name type="common">Mouse-ear cress</name>
    <dbReference type="NCBI Taxonomy" id="3702"/>
    <lineage>
        <taxon>Eukaryota</taxon>
        <taxon>Viridiplantae</taxon>
        <taxon>Streptophyta</taxon>
        <taxon>Embryophyta</taxon>
        <taxon>Tracheophyta</taxon>
        <taxon>Spermatophyta</taxon>
        <taxon>Magnoliopsida</taxon>
        <taxon>eudicotyledons</taxon>
        <taxon>Gunneridae</taxon>
        <taxon>Pentapetalae</taxon>
        <taxon>rosids</taxon>
        <taxon>malvids</taxon>
        <taxon>Brassicales</taxon>
        <taxon>Brassicaceae</taxon>
        <taxon>Camelineae</taxon>
        <taxon>Arabidopsis</taxon>
    </lineage>
</organism>
<sequence>MARQMTSSQFHKSKTLDNKYMLGDEIGKGAYGRVYIGLDLENGDFVAIKQVSLENIGQEDLNTIMQEIDLLKNLNHKNIVKYLGSLKTKTHLHIILEYVENGSLANIIKPNKFGPFPESLVTVYIAQVLEGLVYLHEQGVIHRDIKGANILTTKEGLVKLADFGVATKLNEADFNTHSVVGTPYWMAPEVIELSGVCAASDIWSVGCTIIELLTCVPPYYDLQPMPALYRIVQDDTPPIPDSLSPDITDFLRLCFKKDSRQRPDAKTLLSHPWIRNSRRALRSSLRHSGTIRYMKETDSSSEKDAEGSQEVVESVSAEKVEVTKTNSKSKLPVIGGASFRSEKDQSSPSDLGEEGTDSEDDINSDQGPTLSMHDKSSRQSGTCSISSDAKGTSQDVLENHEKYDRDEIPGNLETEASEGRRNTLATKLVGKEYSIQSSHSFSQKGEDGLRKAVKTPSSFGGNELTRFSDPPGDASLHDLFHPLDKVPEGKTNEASTSTPTANVNQGDSPVADGGKNDLATKLRARIAQKQMEGETGHSQDGGDLFRLMMGVLKDDVLNIDDLVFDEKVPPENLFPLQAVEFSRLVSSLRPDESEDAIVTSSLKLVAMFRQRPGQKAVFVTQNGFLPLMDLLDIPKSRVICAVLQLINEIVKDNTDFLENACLVGLIPLVMSFAGFERDRSREIRKEAAYFLQQLCQSSPLTLQMFISCRGIPVLVGFLEADYAKHREMVHLAIDGMWQVFKLKKSTSRNDFCRIAAKNGILLRLVNTLYSLSEATRLASISGDALILDGQTPRARSGQLDPNNPIFSQRETSPSVIDHPDGLKTRNGGGEEPSHALTSNSQSSDVHQPDALHPDGDRPRLSSVVADATEDVIQQHRISLSANRTSTDKLQKLAEGASNGFPVTQPDQVRPLLSLLEKEPPSRKISGQLDYVKHIAGIERHESRLPLLYASDEKKTNGDLEFIMAEFAEVSGRGKENGNLDTAPRYSSKTMTKKVMAIERVASTCGIASQTASGVLSGSGVLNARPGSTTSSGLLAHALSADVSMDYLEKVADLLLEFARAETTVKSYMCSQSLLSRLFQMFNRVEPPILLKILECTNHLSTDPNCLENLQRADAIKQLIPNLELKEGPLVYQIHHEVLSALFNLCKINKRRQEQAAENGIIPHLMLFVMSDSPLKQYALPLLCDMAHASRNSREQLRAHGGLDVYLSLLDDEYWSVIALDSIAVCLAQDVDQKVEQAFLKKDAIQKLVNFFQNCPERHFVHILEPFLKIITKSSSINKTLALNGLTPLLIARLDHQDAIARLNLLKLIKAVYEKHPKPKQLIVENDLPQKLQNLIEERRDGQRSGGQVLVKQMATSLLKALHINTIL</sequence>
<proteinExistence type="evidence at transcript level"/>
<dbReference type="EC" id="2.7.11.1" evidence="1"/>
<dbReference type="EMBL" id="AC013483">
    <property type="protein sequence ID" value="AAF21208.1"/>
    <property type="molecule type" value="Genomic_DNA"/>
</dbReference>
<dbReference type="EMBL" id="CP002686">
    <property type="protein sequence ID" value="AEE74627.1"/>
    <property type="molecule type" value="Genomic_DNA"/>
</dbReference>
<dbReference type="RefSeq" id="NP_187455.1">
    <property type="nucleotide sequence ID" value="NM_111677.4"/>
</dbReference>
<dbReference type="SMR" id="Q9SFB6"/>
<dbReference type="FunCoup" id="Q9SFB6">
    <property type="interactions" value="1266"/>
</dbReference>
<dbReference type="STRING" id="3702.Q9SFB6"/>
<dbReference type="iPTMnet" id="Q9SFB6"/>
<dbReference type="PaxDb" id="3702-AT3G07980.1"/>
<dbReference type="EnsemblPlants" id="AT3G07980.1">
    <property type="protein sequence ID" value="AT3G07980.1"/>
    <property type="gene ID" value="AT3G07980"/>
</dbReference>
<dbReference type="GeneID" id="819989"/>
<dbReference type="Gramene" id="AT3G07980.1">
    <property type="protein sequence ID" value="AT3G07980.1"/>
    <property type="gene ID" value="AT3G07980"/>
</dbReference>
<dbReference type="KEGG" id="ath:AT3G07980"/>
<dbReference type="Araport" id="AT3G07980"/>
<dbReference type="TAIR" id="AT3G07980">
    <property type="gene designation" value="MAPKKK6"/>
</dbReference>
<dbReference type="eggNOG" id="KOG0198">
    <property type="taxonomic scope" value="Eukaryota"/>
</dbReference>
<dbReference type="HOGENOM" id="CLU_001872_1_1_1"/>
<dbReference type="InParanoid" id="Q9SFB6"/>
<dbReference type="PhylomeDB" id="Q9SFB6"/>
<dbReference type="PRO" id="PR:Q9SFB6"/>
<dbReference type="Proteomes" id="UP000006548">
    <property type="component" value="Chromosome 3"/>
</dbReference>
<dbReference type="ExpressionAtlas" id="Q9SFB6">
    <property type="expression patterns" value="baseline and differential"/>
</dbReference>
<dbReference type="GO" id="GO:0005815">
    <property type="term" value="C:microtubule organizing center"/>
    <property type="evidence" value="ECO:0007669"/>
    <property type="project" value="UniProtKB-SubCell"/>
</dbReference>
<dbReference type="GO" id="GO:0005730">
    <property type="term" value="C:nucleolus"/>
    <property type="evidence" value="ECO:0000314"/>
    <property type="project" value="UniProtKB"/>
</dbReference>
<dbReference type="GO" id="GO:0005886">
    <property type="term" value="C:plasma membrane"/>
    <property type="evidence" value="ECO:0007669"/>
    <property type="project" value="UniProtKB-SubCell"/>
</dbReference>
<dbReference type="GO" id="GO:0005773">
    <property type="term" value="C:vacuole"/>
    <property type="evidence" value="ECO:0007005"/>
    <property type="project" value="TAIR"/>
</dbReference>
<dbReference type="GO" id="GO:0005524">
    <property type="term" value="F:ATP binding"/>
    <property type="evidence" value="ECO:0007669"/>
    <property type="project" value="UniProtKB-KW"/>
</dbReference>
<dbReference type="GO" id="GO:0106310">
    <property type="term" value="F:protein serine kinase activity"/>
    <property type="evidence" value="ECO:0007669"/>
    <property type="project" value="RHEA"/>
</dbReference>
<dbReference type="GO" id="GO:0004674">
    <property type="term" value="F:protein serine/threonine kinase activity"/>
    <property type="evidence" value="ECO:0000250"/>
    <property type="project" value="UniProtKB"/>
</dbReference>
<dbReference type="GO" id="GO:0051301">
    <property type="term" value="P:cell division"/>
    <property type="evidence" value="ECO:0007669"/>
    <property type="project" value="UniProtKB-KW"/>
</dbReference>
<dbReference type="GO" id="GO:0046777">
    <property type="term" value="P:protein autophosphorylation"/>
    <property type="evidence" value="ECO:0000250"/>
    <property type="project" value="UniProtKB"/>
</dbReference>
<dbReference type="GO" id="GO:0051302">
    <property type="term" value="P:regulation of cell division"/>
    <property type="evidence" value="ECO:0000250"/>
    <property type="project" value="UniProtKB"/>
</dbReference>
<dbReference type="CDD" id="cd06627">
    <property type="entry name" value="STKc_Cdc7_like"/>
    <property type="match status" value="1"/>
</dbReference>
<dbReference type="FunFam" id="1.10.510.10:FF:000372">
    <property type="entry name" value="MAP3K epsilon protein kinase 1"/>
    <property type="match status" value="1"/>
</dbReference>
<dbReference type="FunFam" id="1.25.10.10:FF:000278">
    <property type="entry name" value="MAP3K epsilon protein kinase 1"/>
    <property type="match status" value="1"/>
</dbReference>
<dbReference type="FunFam" id="1.25.10.10:FF:000304">
    <property type="entry name" value="MAP3K epsilon protein kinase 1-like"/>
    <property type="match status" value="1"/>
</dbReference>
<dbReference type="Gene3D" id="1.25.10.10">
    <property type="entry name" value="Leucine-rich Repeat Variant"/>
    <property type="match status" value="3"/>
</dbReference>
<dbReference type="Gene3D" id="1.10.510.10">
    <property type="entry name" value="Transferase(Phosphotransferase) domain 1"/>
    <property type="match status" value="1"/>
</dbReference>
<dbReference type="InterPro" id="IPR011989">
    <property type="entry name" value="ARM-like"/>
</dbReference>
<dbReference type="InterPro" id="IPR016024">
    <property type="entry name" value="ARM-type_fold"/>
</dbReference>
<dbReference type="InterPro" id="IPR000225">
    <property type="entry name" value="Armadillo"/>
</dbReference>
<dbReference type="InterPro" id="IPR052441">
    <property type="entry name" value="Armadillo-Ser/Thr_Kinase"/>
</dbReference>
<dbReference type="InterPro" id="IPR011009">
    <property type="entry name" value="Kinase-like_dom_sf"/>
</dbReference>
<dbReference type="InterPro" id="IPR000719">
    <property type="entry name" value="Prot_kinase_dom"/>
</dbReference>
<dbReference type="InterPro" id="IPR017441">
    <property type="entry name" value="Protein_kinase_ATP_BS"/>
</dbReference>
<dbReference type="InterPro" id="IPR001245">
    <property type="entry name" value="Ser-Thr/Tyr_kinase_cat_dom"/>
</dbReference>
<dbReference type="InterPro" id="IPR008271">
    <property type="entry name" value="Ser/Thr_kinase_AS"/>
</dbReference>
<dbReference type="PANTHER" id="PTHR46618">
    <property type="entry name" value="ARMADILLO REPEAT-CONTAINING PROTEIN 3"/>
    <property type="match status" value="1"/>
</dbReference>
<dbReference type="PANTHER" id="PTHR46618:SF1">
    <property type="entry name" value="ARMADILLO REPEAT-CONTAINING PROTEIN 3"/>
    <property type="match status" value="1"/>
</dbReference>
<dbReference type="Pfam" id="PF00069">
    <property type="entry name" value="Pkinase"/>
    <property type="match status" value="1"/>
</dbReference>
<dbReference type="PRINTS" id="PR00109">
    <property type="entry name" value="TYRKINASE"/>
</dbReference>
<dbReference type="SMART" id="SM00185">
    <property type="entry name" value="ARM"/>
    <property type="match status" value="5"/>
</dbReference>
<dbReference type="SMART" id="SM00220">
    <property type="entry name" value="S_TKc"/>
    <property type="match status" value="1"/>
</dbReference>
<dbReference type="SUPFAM" id="SSF48371">
    <property type="entry name" value="ARM repeat"/>
    <property type="match status" value="1"/>
</dbReference>
<dbReference type="SUPFAM" id="SSF56112">
    <property type="entry name" value="Protein kinase-like (PK-like)"/>
    <property type="match status" value="1"/>
</dbReference>
<dbReference type="PROSITE" id="PS00107">
    <property type="entry name" value="PROTEIN_KINASE_ATP"/>
    <property type="match status" value="1"/>
</dbReference>
<dbReference type="PROSITE" id="PS50011">
    <property type="entry name" value="PROTEIN_KINASE_DOM"/>
    <property type="match status" value="1"/>
</dbReference>
<dbReference type="PROSITE" id="PS00108">
    <property type="entry name" value="PROTEIN_KINASE_ST"/>
    <property type="match status" value="1"/>
</dbReference>
<name>M3KE2_ARATH</name>